<feature type="chain" id="PRO_0000149906" description="Ornithine decarboxylase">
    <location>
        <begin position="1"/>
        <end position="484"/>
    </location>
</feature>
<feature type="active site" description="Proton donor; shared with dimeric partner" evidence="4">
    <location>
        <position position="422"/>
    </location>
</feature>
<feature type="binding site" evidence="4">
    <location>
        <position position="245"/>
    </location>
    <ligand>
        <name>pyridoxal 5'-phosphate</name>
        <dbReference type="ChEBI" id="CHEBI:597326"/>
    </ligand>
</feature>
<feature type="binding site" evidence="4">
    <location>
        <position position="282"/>
    </location>
    <ligand>
        <name>pyridoxal 5'-phosphate</name>
        <dbReference type="ChEBI" id="CHEBI:597326"/>
    </ligand>
</feature>
<feature type="binding site" evidence="4">
    <location>
        <begin position="315"/>
        <end position="318"/>
    </location>
    <ligand>
        <name>pyridoxal 5'-phosphate</name>
        <dbReference type="ChEBI" id="CHEBI:597326"/>
    </ligand>
</feature>
<feature type="binding site" description="in other chain" evidence="2">
    <location>
        <begin position="381"/>
        <end position="382"/>
    </location>
    <ligand>
        <name>substrate</name>
        <note>ligand shared between dimeric partners</note>
    </ligand>
</feature>
<feature type="binding site" evidence="2">
    <location>
        <position position="423"/>
    </location>
    <ligand>
        <name>substrate</name>
        <note>ligand shared between dimeric partners</note>
    </ligand>
</feature>
<feature type="binding site" evidence="4">
    <location>
        <position position="452"/>
    </location>
    <ligand>
        <name>pyridoxal 5'-phosphate</name>
        <dbReference type="ChEBI" id="CHEBI:597326"/>
    </ligand>
</feature>
<feature type="site" description="Stacks against the aromatic ring of pyridoxal phosphate and stabilizes reaction intermediates" evidence="1">
    <location>
        <position position="242"/>
    </location>
</feature>
<feature type="modified residue" description="N6-(pyridoxal phosphate)lysine" evidence="4">
    <location>
        <position position="114"/>
    </location>
</feature>
<dbReference type="EC" id="4.1.1.17"/>
<dbReference type="EMBL" id="M68969">
    <property type="protein sequence ID" value="AAA33604.1"/>
    <property type="molecule type" value="mRNA"/>
</dbReference>
<dbReference type="EMBL" id="M68970">
    <property type="protein sequence ID" value="AAA33605.1"/>
    <property type="molecule type" value="Genomic_DNA"/>
</dbReference>
<dbReference type="EMBL" id="L16920">
    <property type="protein sequence ID" value="AAA33614.1"/>
    <property type="molecule type" value="Genomic_DNA"/>
</dbReference>
<dbReference type="EMBL" id="BX842618">
    <property type="protein sequence ID" value="CAE76122.1"/>
    <property type="molecule type" value="Genomic_DNA"/>
</dbReference>
<dbReference type="EMBL" id="CM002240">
    <property type="protein sequence ID" value="EAA31513.1"/>
    <property type="molecule type" value="Genomic_DNA"/>
</dbReference>
<dbReference type="PIR" id="A42065">
    <property type="entry name" value="A42065"/>
</dbReference>
<dbReference type="RefSeq" id="XP_960749.1">
    <property type="nucleotide sequence ID" value="XM_955656.3"/>
</dbReference>
<dbReference type="SMR" id="P27121"/>
<dbReference type="FunCoup" id="P27121">
    <property type="interactions" value="1413"/>
</dbReference>
<dbReference type="STRING" id="367110.P27121"/>
<dbReference type="PaxDb" id="5141-EFNCRP00000004012"/>
<dbReference type="EnsemblFungi" id="EAA31513">
    <property type="protein sequence ID" value="EAA31513"/>
    <property type="gene ID" value="NCU01271"/>
</dbReference>
<dbReference type="GeneID" id="3876899"/>
<dbReference type="KEGG" id="ncr:NCU01271"/>
<dbReference type="VEuPathDB" id="FungiDB:NCU01271"/>
<dbReference type="HOGENOM" id="CLU_026444_1_2_1"/>
<dbReference type="InParanoid" id="P27121"/>
<dbReference type="OMA" id="SFFVCDL"/>
<dbReference type="OrthoDB" id="5034579at2759"/>
<dbReference type="SABIO-RK" id="P27121"/>
<dbReference type="UniPathway" id="UPA00535">
    <property type="reaction ID" value="UER00288"/>
</dbReference>
<dbReference type="Proteomes" id="UP000001805">
    <property type="component" value="Chromosome 2, Linkage Group V"/>
</dbReference>
<dbReference type="GO" id="GO:0005737">
    <property type="term" value="C:cytoplasm"/>
    <property type="evidence" value="ECO:0000318"/>
    <property type="project" value="GO_Central"/>
</dbReference>
<dbReference type="GO" id="GO:0004586">
    <property type="term" value="F:ornithine decarboxylase activity"/>
    <property type="evidence" value="ECO:0000318"/>
    <property type="project" value="GO_Central"/>
</dbReference>
<dbReference type="GO" id="GO:0033387">
    <property type="term" value="P:putrescine biosynthetic process from arginine, via ornithine"/>
    <property type="evidence" value="ECO:0000318"/>
    <property type="project" value="GO_Central"/>
</dbReference>
<dbReference type="CDD" id="cd00622">
    <property type="entry name" value="PLPDE_III_ODC"/>
    <property type="match status" value="1"/>
</dbReference>
<dbReference type="FunFam" id="2.40.37.10:FF:000010">
    <property type="entry name" value="Ornithine decarboxylase"/>
    <property type="match status" value="1"/>
</dbReference>
<dbReference type="FunFam" id="3.20.20.10:FF:000005">
    <property type="entry name" value="Ornithine decarboxylase"/>
    <property type="match status" value="1"/>
</dbReference>
<dbReference type="Gene3D" id="3.20.20.10">
    <property type="entry name" value="Alanine racemase"/>
    <property type="match status" value="1"/>
</dbReference>
<dbReference type="Gene3D" id="2.40.37.10">
    <property type="entry name" value="Lyase, Ornithine Decarboxylase, Chain A, domain 1"/>
    <property type="match status" value="1"/>
</dbReference>
<dbReference type="InterPro" id="IPR009006">
    <property type="entry name" value="Ala_racemase/Decarboxylase_C"/>
</dbReference>
<dbReference type="InterPro" id="IPR022643">
    <property type="entry name" value="De-COase2_C"/>
</dbReference>
<dbReference type="InterPro" id="IPR022657">
    <property type="entry name" value="De-COase2_CS"/>
</dbReference>
<dbReference type="InterPro" id="IPR022644">
    <property type="entry name" value="De-COase2_N"/>
</dbReference>
<dbReference type="InterPro" id="IPR022653">
    <property type="entry name" value="De-COase2_pyr-phos_BS"/>
</dbReference>
<dbReference type="InterPro" id="IPR000183">
    <property type="entry name" value="Orn/DAP/Arg_de-COase"/>
</dbReference>
<dbReference type="InterPro" id="IPR002433">
    <property type="entry name" value="Orn_de-COase"/>
</dbReference>
<dbReference type="InterPro" id="IPR029066">
    <property type="entry name" value="PLP-binding_barrel"/>
</dbReference>
<dbReference type="PANTHER" id="PTHR11482">
    <property type="entry name" value="ARGININE/DIAMINOPIMELATE/ORNITHINE DECARBOXYLASE"/>
    <property type="match status" value="1"/>
</dbReference>
<dbReference type="PANTHER" id="PTHR11482:SF6">
    <property type="entry name" value="ORNITHINE DECARBOXYLASE 1-RELATED"/>
    <property type="match status" value="1"/>
</dbReference>
<dbReference type="Pfam" id="PF02784">
    <property type="entry name" value="Orn_Arg_deC_N"/>
    <property type="match status" value="1"/>
</dbReference>
<dbReference type="Pfam" id="PF00278">
    <property type="entry name" value="Orn_DAP_Arg_deC"/>
    <property type="match status" value="1"/>
</dbReference>
<dbReference type="PRINTS" id="PR01179">
    <property type="entry name" value="ODADCRBXLASE"/>
</dbReference>
<dbReference type="PRINTS" id="PR01182">
    <property type="entry name" value="ORNDCRBXLASE"/>
</dbReference>
<dbReference type="SUPFAM" id="SSF50621">
    <property type="entry name" value="Alanine racemase C-terminal domain-like"/>
    <property type="match status" value="1"/>
</dbReference>
<dbReference type="SUPFAM" id="SSF51419">
    <property type="entry name" value="PLP-binding barrel"/>
    <property type="match status" value="1"/>
</dbReference>
<dbReference type="PROSITE" id="PS00878">
    <property type="entry name" value="ODR_DC_2_1"/>
    <property type="match status" value="1"/>
</dbReference>
<dbReference type="PROSITE" id="PS00879">
    <property type="entry name" value="ODR_DC_2_2"/>
    <property type="match status" value="1"/>
</dbReference>
<gene>
    <name type="primary">spe-1</name>
    <name type="ORF">B13M13.130</name>
    <name type="ORF">NCU01271</name>
</gene>
<sequence>MVMPTVVSDRMGTIDFIDYTNNHVFSKCQTDSLNTVNNGSLKHDDYLHGLANGKLVAKQMIGDALRQRVESIDSEFCEPGDEDTFFVADLGEVYRQHLRWKLNLPRVKPFYAVKCHPDERLLQLLAALGTGFDCASKAEIEQVLRMGVDPSRIIYAQPCKTNSYLRYVAQQGVRQMTFDNADELRKIARLYPDAELFLRILTDDSSSLCRFSMKFGASLDSTDGLLGLARQLGLNVVGVSFHVGSGASDPTAFLKAVQDAHVVFQQAAAYGYSLKTLDVGGGFCSDDSFEQMANVLRAALDEYFPAHTGVNLIAEPGRYYASSAFTLACNIIARRTIQDGSAVSVSDSSSMSDDGSVNNGDARYMVYVNDGLYGNFSSIMFDHQHPVAKILRAGGRTMYNSVAAHESSAEDAIEYSIWGPTCDGIDRITESIRFREILDVGDWLYFEDMGAYTKCSATTFNGFSNEHDVIYVCSEPGAMALLGL</sequence>
<proteinExistence type="evidence at transcript level"/>
<accession>P27121</accession>
<accession>Q7S7C1</accession>
<reference key="1">
    <citation type="journal article" date="1992" name="Mol. Cell. Biol.">
        <title>Ornithine decarboxylase gene of Neurospora crassa: isolation, sequence, and polyamine-mediated regulation of its mRNA.</title>
        <authorList>
            <person name="Williams L.J."/>
            <person name="Barnett G.R."/>
            <person name="Ristow J.L."/>
            <person name="Pitkin J."/>
            <person name="Perriere M."/>
            <person name="Davis R.H."/>
        </authorList>
    </citation>
    <scope>NUCLEOTIDE SEQUENCE [GENOMIC DNA / MRNA]</scope>
    <source>
        <strain>74-ORS-6a / FGSC 4200</strain>
    </source>
</reference>
<reference key="2">
    <citation type="journal article" date="2003" name="Nucleic Acids Res.">
        <title>What's in the genome of a filamentous fungus? Analysis of the Neurospora genome sequence.</title>
        <authorList>
            <person name="Mannhaupt G."/>
            <person name="Montrone C."/>
            <person name="Haase D."/>
            <person name="Mewes H.-W."/>
            <person name="Aign V."/>
            <person name="Hoheisel J.D."/>
            <person name="Fartmann B."/>
            <person name="Nyakatura G."/>
            <person name="Kempken F."/>
            <person name="Maier J."/>
            <person name="Schulte U."/>
        </authorList>
    </citation>
    <scope>NUCLEOTIDE SEQUENCE [LARGE SCALE GENOMIC DNA]</scope>
    <source>
        <strain>ATCC 24698 / 74-OR23-1A / CBS 708.71 / DSM 1257 / FGSC 987</strain>
    </source>
</reference>
<reference key="3">
    <citation type="journal article" date="2003" name="Nature">
        <title>The genome sequence of the filamentous fungus Neurospora crassa.</title>
        <authorList>
            <person name="Galagan J.E."/>
            <person name="Calvo S.E."/>
            <person name="Borkovich K.A."/>
            <person name="Selker E.U."/>
            <person name="Read N.D."/>
            <person name="Jaffe D.B."/>
            <person name="FitzHugh W."/>
            <person name="Ma L.-J."/>
            <person name="Smirnov S."/>
            <person name="Purcell S."/>
            <person name="Rehman B."/>
            <person name="Elkins T."/>
            <person name="Engels R."/>
            <person name="Wang S."/>
            <person name="Nielsen C.B."/>
            <person name="Butler J."/>
            <person name="Endrizzi M."/>
            <person name="Qui D."/>
            <person name="Ianakiev P."/>
            <person name="Bell-Pedersen D."/>
            <person name="Nelson M.A."/>
            <person name="Werner-Washburne M."/>
            <person name="Selitrennikoff C.P."/>
            <person name="Kinsey J.A."/>
            <person name="Braun E.L."/>
            <person name="Zelter A."/>
            <person name="Schulte U."/>
            <person name="Kothe G.O."/>
            <person name="Jedd G."/>
            <person name="Mewes H.-W."/>
            <person name="Staben C."/>
            <person name="Marcotte E."/>
            <person name="Greenberg D."/>
            <person name="Roy A."/>
            <person name="Foley K."/>
            <person name="Naylor J."/>
            <person name="Stange-Thomann N."/>
            <person name="Barrett R."/>
            <person name="Gnerre S."/>
            <person name="Kamal M."/>
            <person name="Kamvysselis M."/>
            <person name="Mauceli E.W."/>
            <person name="Bielke C."/>
            <person name="Rudd S."/>
            <person name="Frishman D."/>
            <person name="Krystofova S."/>
            <person name="Rasmussen C."/>
            <person name="Metzenberg R.L."/>
            <person name="Perkins D.D."/>
            <person name="Kroken S."/>
            <person name="Cogoni C."/>
            <person name="Macino G."/>
            <person name="Catcheside D.E.A."/>
            <person name="Li W."/>
            <person name="Pratt R.J."/>
            <person name="Osmani S.A."/>
            <person name="DeSouza C.P.C."/>
            <person name="Glass N.L."/>
            <person name="Orbach M.J."/>
            <person name="Berglund J.A."/>
            <person name="Voelker R."/>
            <person name="Yarden O."/>
            <person name="Plamann M."/>
            <person name="Seiler S."/>
            <person name="Dunlap J.C."/>
            <person name="Radford A."/>
            <person name="Aramayo R."/>
            <person name="Natvig D.O."/>
            <person name="Alex L.A."/>
            <person name="Mannhaupt G."/>
            <person name="Ebbole D.J."/>
            <person name="Freitag M."/>
            <person name="Paulsen I."/>
            <person name="Sachs M.S."/>
            <person name="Lander E.S."/>
            <person name="Nusbaum C."/>
            <person name="Birren B.W."/>
        </authorList>
    </citation>
    <scope>NUCLEOTIDE SEQUENCE [LARGE SCALE GENOMIC DNA]</scope>
    <source>
        <strain>ATCC 24698 / 74-OR23-1A / CBS 708.71 / DSM 1257 / FGSC 987</strain>
    </source>
</reference>
<organism>
    <name type="scientific">Neurospora crassa (strain ATCC 24698 / 74-OR23-1A / CBS 708.71 / DSM 1257 / FGSC 987)</name>
    <dbReference type="NCBI Taxonomy" id="367110"/>
    <lineage>
        <taxon>Eukaryota</taxon>
        <taxon>Fungi</taxon>
        <taxon>Dikarya</taxon>
        <taxon>Ascomycota</taxon>
        <taxon>Pezizomycotina</taxon>
        <taxon>Sordariomycetes</taxon>
        <taxon>Sordariomycetidae</taxon>
        <taxon>Sordariales</taxon>
        <taxon>Sordariaceae</taxon>
        <taxon>Neurospora</taxon>
    </lineage>
</organism>
<name>DCOR_NEUCR</name>
<protein>
    <recommendedName>
        <fullName>Ornithine decarboxylase</fullName>
        <shortName>ODC</shortName>
        <ecNumber>4.1.1.17</ecNumber>
    </recommendedName>
</protein>
<keyword id="KW-0963">Cytoplasm</keyword>
<keyword id="KW-0210">Decarboxylase</keyword>
<keyword id="KW-0456">Lyase</keyword>
<keyword id="KW-0620">Polyamine biosynthesis</keyword>
<keyword id="KW-0663">Pyridoxal phosphate</keyword>
<keyword id="KW-1185">Reference proteome</keyword>
<evidence type="ECO:0000250" key="1">
    <source>
        <dbReference type="UniProtKB" id="P00860"/>
    </source>
</evidence>
<evidence type="ECO:0000250" key="2">
    <source>
        <dbReference type="UniProtKB" id="P07805"/>
    </source>
</evidence>
<evidence type="ECO:0000250" key="3">
    <source>
        <dbReference type="UniProtKB" id="P08432"/>
    </source>
</evidence>
<evidence type="ECO:0000250" key="4">
    <source>
        <dbReference type="UniProtKB" id="P11926"/>
    </source>
</evidence>
<evidence type="ECO:0000305" key="5"/>
<comment type="function">
    <text evidence="3">Catalyzes the first and rate-limiting step of polyamine biosynthesis that converts ornithine into putrescine, which is the precursor for the polyamines, spermidine and spermine. Polyamines are essential for cell proliferation and are implicated in cellular processes, ranging from DNA replication to apoptosis.</text>
</comment>
<comment type="catalytic activity">
    <reaction evidence="3">
        <text>L-ornithine + H(+) = putrescine + CO2</text>
        <dbReference type="Rhea" id="RHEA:22964"/>
        <dbReference type="ChEBI" id="CHEBI:15378"/>
        <dbReference type="ChEBI" id="CHEBI:16526"/>
        <dbReference type="ChEBI" id="CHEBI:46911"/>
        <dbReference type="ChEBI" id="CHEBI:326268"/>
        <dbReference type="EC" id="4.1.1.17"/>
    </reaction>
</comment>
<comment type="cofactor">
    <cofactor evidence="3">
        <name>pyridoxal 5'-phosphate</name>
        <dbReference type="ChEBI" id="CHEBI:597326"/>
    </cofactor>
</comment>
<comment type="activity regulation">
    <text evidence="3">Inhibited by antizyme (AZ) OAZ1 in response to polyamine levels. AZ inhibits the assembly of the functional homodimer by binding to ODC monomers and targeting them for ubiquitin-independent proteolytic destruction by the 26S proteasome.</text>
</comment>
<comment type="pathway">
    <text>Amine and polyamine biosynthesis; putrescine biosynthesis via L-ornithine pathway; putrescine from L-ornithine: step 1/1.</text>
</comment>
<comment type="subunit">
    <text evidence="3 4">Homodimer (By similarity). Only the dimer is catalytically active, as the active sites are constructed of residues from both monomers (By similarity).</text>
</comment>
<comment type="subcellular location">
    <subcellularLocation>
        <location evidence="3">Cytoplasm</location>
    </subcellularLocation>
</comment>
<comment type="similarity">
    <text evidence="5">Belongs to the Orn/Lys/Arg decarboxylase class-II family.</text>
</comment>
<comment type="caution">
    <text evidence="5">It is uncertain whether Met-1 or Met-3 is the initiator.</text>
</comment>